<protein>
    <recommendedName>
        <fullName>Copper-transporting P-type ATPase</fullName>
        <ecNumber>7.2.2.9</ecNumber>
    </recommendedName>
</protein>
<name>ATCU_RHILV</name>
<sequence length="841" mass="88059">MNIKQEDDHHHSHAHGDNHCHCGHDQEKAADAIVRDPICGMTVDPQAGKPSLGHGGRIYHFCSEHCRTKFAAAPEDYLTAKDPVCGMSVDRSTARYFLKAEGEKFYFCSAACQAKFEADPAAYRDGQRPTAKPAPKGTLYTCPMHPEVVSDRPGDCPKCGMALEPMGIPPTDEGPNPELVDFVRRLWVSAILALPLLALGMGPMLGLPLREAIGEPQATFIELLLATPVVLWAALPFFRRAWASVVNRSPNMWTLIGLGVGTAYLYSVVATLAPGIFPMSFRGHGAAVPVYFEAAAVIVALVFVGQVLELKARERTGSAIRALLDLAPKTARRIDAEGNESDVPVDDINVADRLRVRPGERVPVDGSVLEGQSTVDESMISGEPLPVEKSKGDPLTGGTINKNGTFVMSAEKVGADTVLSRIVDMVAKAQRSRAPIQGAVDRVSAVFVPAVVAVALLAFLAWAAIGPEPRMANGLLAAVAVLIIACPCALGLATPMSIMIATGRGAGEGVLIKDAEALERFSKGDTLIVDKTGTLTEGKPKLTDIAAFGRVGEDRLLSLAASLERGSEHPLAEAIVSGAEERGVPFVEVTGFEAKTGKGVQGIADGTMVALGNSAMLADLGIDPAALSEKTEALRGDGKTVMFVVFDGALAGLVAVADRIKPTTAAAIQALHDSGLKIIMATGDNERTARAVAKSLGIDEVRADVLPEGKKALIDELRSKGAIIAMAGDGVNDAPALAAADVGIAMGTGADVAMESAGITLVKGDLTGIVRARRLAEATMRNIRQNLGFAFGYNALGVPVAAGVLYPILGLLLSPMIAAAAMSLSSVSVISNALRLRFAKL</sequence>
<keyword id="KW-0067">ATP-binding</keyword>
<keyword id="KW-1003">Cell membrane</keyword>
<keyword id="KW-0186">Copper</keyword>
<keyword id="KW-0187">Copper transport</keyword>
<keyword id="KW-0406">Ion transport</keyword>
<keyword id="KW-0460">Magnesium</keyword>
<keyword id="KW-0472">Membrane</keyword>
<keyword id="KW-0479">Metal-binding</keyword>
<keyword id="KW-0547">Nucleotide-binding</keyword>
<keyword id="KW-0597">Phosphoprotein</keyword>
<keyword id="KW-1278">Translocase</keyword>
<keyword id="KW-0812">Transmembrane</keyword>
<keyword id="KW-1133">Transmembrane helix</keyword>
<keyword id="KW-0813">Transport</keyword>
<accession>Q9X5V3</accession>
<reference key="1">
    <citation type="journal article" date="2002" name="Mol. Microbiol.">
        <title>ActP controls copper homeostasis in Rhizobium leguminosarum bv. viciae and Sinorhizobium meliloti preventing low pH-induced copper toxicity.</title>
        <authorList>
            <person name="Reeve W.G."/>
            <person name="Tiwari R.P."/>
            <person name="Kale N.B."/>
            <person name="Dilworth M.J."/>
            <person name="Glenn A.R."/>
        </authorList>
    </citation>
    <scope>NUCLEOTIDE SEQUENCE [GENOMIC DNA]</scope>
    <scope>CHARACTERIZATION</scope>
    <source>
        <strain>WSM710</strain>
    </source>
</reference>
<feature type="chain" id="PRO_0000046326" description="Copper-transporting P-type ATPase">
    <location>
        <begin position="1"/>
        <end position="841"/>
    </location>
</feature>
<feature type="transmembrane region" description="Helical" evidence="2">
    <location>
        <begin position="186"/>
        <end position="206"/>
    </location>
</feature>
<feature type="transmembrane region" description="Helical" evidence="2">
    <location>
        <begin position="218"/>
        <end position="238"/>
    </location>
</feature>
<feature type="transmembrane region" description="Helical" evidence="2">
    <location>
        <begin position="256"/>
        <end position="276"/>
    </location>
</feature>
<feature type="transmembrane region" description="Helical" evidence="2">
    <location>
        <begin position="285"/>
        <end position="305"/>
    </location>
</feature>
<feature type="transmembrane region" description="Helical" evidence="2">
    <location>
        <begin position="445"/>
        <end position="465"/>
    </location>
</feature>
<feature type="transmembrane region" description="Helical" evidence="2">
    <location>
        <begin position="474"/>
        <end position="494"/>
    </location>
</feature>
<feature type="transmembrane region" description="Helical" evidence="2">
    <location>
        <begin position="602"/>
        <end position="622"/>
    </location>
</feature>
<feature type="transmembrane region" description="Helical" evidence="2">
    <location>
        <begin position="638"/>
        <end position="658"/>
    </location>
</feature>
<feature type="transmembrane region" description="Helical" evidence="2">
    <location>
        <begin position="742"/>
        <end position="762"/>
    </location>
</feature>
<feature type="transmembrane region" description="Helical" evidence="2">
    <location>
        <begin position="800"/>
        <end position="820"/>
    </location>
</feature>
<feature type="active site" description="4-aspartylphosphate intermediate" evidence="1">
    <location>
        <position position="530"/>
    </location>
</feature>
<feature type="binding site" evidence="1">
    <location>
        <position position="729"/>
    </location>
    <ligand>
        <name>Mg(2+)</name>
        <dbReference type="ChEBI" id="CHEBI:18420"/>
    </ligand>
</feature>
<feature type="binding site" evidence="1">
    <location>
        <position position="733"/>
    </location>
    <ligand>
        <name>Mg(2+)</name>
        <dbReference type="ChEBI" id="CHEBI:18420"/>
    </ligand>
</feature>
<proteinExistence type="evidence at protein level"/>
<gene>
    <name type="primary">actP</name>
</gene>
<organism>
    <name type="scientific">Rhizobium leguminosarum bv. viciae</name>
    <dbReference type="NCBI Taxonomy" id="387"/>
    <lineage>
        <taxon>Bacteria</taxon>
        <taxon>Pseudomonadati</taxon>
        <taxon>Pseudomonadota</taxon>
        <taxon>Alphaproteobacteria</taxon>
        <taxon>Hyphomicrobiales</taxon>
        <taxon>Rhizobiaceae</taxon>
        <taxon>Rhizobium/Agrobacterium group</taxon>
        <taxon>Rhizobium</taxon>
    </lineage>
</organism>
<dbReference type="EC" id="7.2.2.9"/>
<dbReference type="EMBL" id="AF127795">
    <property type="protein sequence ID" value="AAD26860.1"/>
    <property type="molecule type" value="Genomic_DNA"/>
</dbReference>
<dbReference type="SMR" id="Q9X5V3"/>
<dbReference type="GO" id="GO:0005886">
    <property type="term" value="C:plasma membrane"/>
    <property type="evidence" value="ECO:0007669"/>
    <property type="project" value="UniProtKB-SubCell"/>
</dbReference>
<dbReference type="GO" id="GO:0005524">
    <property type="term" value="F:ATP binding"/>
    <property type="evidence" value="ECO:0007669"/>
    <property type="project" value="UniProtKB-KW"/>
</dbReference>
<dbReference type="GO" id="GO:0016887">
    <property type="term" value="F:ATP hydrolysis activity"/>
    <property type="evidence" value="ECO:0007669"/>
    <property type="project" value="InterPro"/>
</dbReference>
<dbReference type="GO" id="GO:0005507">
    <property type="term" value="F:copper ion binding"/>
    <property type="evidence" value="ECO:0007669"/>
    <property type="project" value="TreeGrafter"/>
</dbReference>
<dbReference type="GO" id="GO:0016491">
    <property type="term" value="F:oxidoreductase activity"/>
    <property type="evidence" value="ECO:0007669"/>
    <property type="project" value="InterPro"/>
</dbReference>
<dbReference type="GO" id="GO:0043682">
    <property type="term" value="F:P-type divalent copper transporter activity"/>
    <property type="evidence" value="ECO:0007669"/>
    <property type="project" value="UniProtKB-EC"/>
</dbReference>
<dbReference type="GO" id="GO:0055070">
    <property type="term" value="P:copper ion homeostasis"/>
    <property type="evidence" value="ECO:0007669"/>
    <property type="project" value="TreeGrafter"/>
</dbReference>
<dbReference type="CDD" id="cd02094">
    <property type="entry name" value="P-type_ATPase_Cu-like"/>
    <property type="match status" value="1"/>
</dbReference>
<dbReference type="FunFam" id="2.70.150.10:FF:000020">
    <property type="entry name" value="Copper-exporting P-type ATPase A"/>
    <property type="match status" value="1"/>
</dbReference>
<dbReference type="Gene3D" id="3.40.1110.10">
    <property type="entry name" value="Calcium-transporting ATPase, cytoplasmic domain N"/>
    <property type="match status" value="1"/>
</dbReference>
<dbReference type="Gene3D" id="2.70.150.10">
    <property type="entry name" value="Calcium-transporting ATPase, cytoplasmic transduction domain A"/>
    <property type="match status" value="1"/>
</dbReference>
<dbReference type="Gene3D" id="3.40.50.1000">
    <property type="entry name" value="HAD superfamily/HAD-like"/>
    <property type="match status" value="1"/>
</dbReference>
<dbReference type="Gene3D" id="1.10.620.20">
    <property type="entry name" value="Ribonucleotide Reductase, subunit A"/>
    <property type="match status" value="2"/>
</dbReference>
<dbReference type="InterPro" id="IPR023299">
    <property type="entry name" value="ATPase_P-typ_cyto_dom_N"/>
</dbReference>
<dbReference type="InterPro" id="IPR018303">
    <property type="entry name" value="ATPase_P-typ_P_site"/>
</dbReference>
<dbReference type="InterPro" id="IPR023298">
    <property type="entry name" value="ATPase_P-typ_TM_dom_sf"/>
</dbReference>
<dbReference type="InterPro" id="IPR008250">
    <property type="entry name" value="ATPase_P-typ_transduc_dom_A_sf"/>
</dbReference>
<dbReference type="InterPro" id="IPR009078">
    <property type="entry name" value="Ferritin-like_SF"/>
</dbReference>
<dbReference type="InterPro" id="IPR036412">
    <property type="entry name" value="HAD-like_sf"/>
</dbReference>
<dbReference type="InterPro" id="IPR023214">
    <property type="entry name" value="HAD_sf"/>
</dbReference>
<dbReference type="InterPro" id="IPR045800">
    <property type="entry name" value="HMBD"/>
</dbReference>
<dbReference type="InterPro" id="IPR027256">
    <property type="entry name" value="P-typ_ATPase_IB"/>
</dbReference>
<dbReference type="InterPro" id="IPR001757">
    <property type="entry name" value="P_typ_ATPase"/>
</dbReference>
<dbReference type="InterPro" id="IPR044492">
    <property type="entry name" value="P_typ_ATPase_HD_dom"/>
</dbReference>
<dbReference type="InterPro" id="IPR012348">
    <property type="entry name" value="RNR-like"/>
</dbReference>
<dbReference type="InterPro" id="IPR011017">
    <property type="entry name" value="TRASH_dom"/>
</dbReference>
<dbReference type="InterPro" id="IPR007029">
    <property type="entry name" value="YHS_dom"/>
</dbReference>
<dbReference type="NCBIfam" id="TIGR01511">
    <property type="entry name" value="ATPase-IB1_Cu"/>
    <property type="match status" value="1"/>
</dbReference>
<dbReference type="NCBIfam" id="TIGR01525">
    <property type="entry name" value="ATPase-IB_hvy"/>
    <property type="match status" value="1"/>
</dbReference>
<dbReference type="NCBIfam" id="TIGR01494">
    <property type="entry name" value="ATPase_P-type"/>
    <property type="match status" value="1"/>
</dbReference>
<dbReference type="PANTHER" id="PTHR43520">
    <property type="entry name" value="ATP7, ISOFORM B"/>
    <property type="match status" value="1"/>
</dbReference>
<dbReference type="PANTHER" id="PTHR43520:SF8">
    <property type="entry name" value="P-TYPE CU(+) TRANSPORTER"/>
    <property type="match status" value="1"/>
</dbReference>
<dbReference type="Pfam" id="PF00122">
    <property type="entry name" value="E1-E2_ATPase"/>
    <property type="match status" value="1"/>
</dbReference>
<dbReference type="Pfam" id="PF19335">
    <property type="entry name" value="HMBD"/>
    <property type="match status" value="1"/>
</dbReference>
<dbReference type="Pfam" id="PF00702">
    <property type="entry name" value="Hydrolase"/>
    <property type="match status" value="1"/>
</dbReference>
<dbReference type="Pfam" id="PF04945">
    <property type="entry name" value="YHS"/>
    <property type="match status" value="2"/>
</dbReference>
<dbReference type="PRINTS" id="PR00119">
    <property type="entry name" value="CATATPASE"/>
</dbReference>
<dbReference type="PRINTS" id="PR00943">
    <property type="entry name" value="CUATPASE"/>
</dbReference>
<dbReference type="SFLD" id="SFLDG00002">
    <property type="entry name" value="C1.7:_P-type_atpase_like"/>
    <property type="match status" value="1"/>
</dbReference>
<dbReference type="SFLD" id="SFLDF00027">
    <property type="entry name" value="p-type_atpase"/>
    <property type="match status" value="1"/>
</dbReference>
<dbReference type="SMART" id="SM00746">
    <property type="entry name" value="TRASH"/>
    <property type="match status" value="2"/>
</dbReference>
<dbReference type="SUPFAM" id="SSF81653">
    <property type="entry name" value="Calcium ATPase, transduction domain A"/>
    <property type="match status" value="1"/>
</dbReference>
<dbReference type="SUPFAM" id="SSF81665">
    <property type="entry name" value="Calcium ATPase, transmembrane domain M"/>
    <property type="match status" value="1"/>
</dbReference>
<dbReference type="SUPFAM" id="SSF47240">
    <property type="entry name" value="Ferritin-like"/>
    <property type="match status" value="2"/>
</dbReference>
<dbReference type="SUPFAM" id="SSF56784">
    <property type="entry name" value="HAD-like"/>
    <property type="match status" value="1"/>
</dbReference>
<dbReference type="PROSITE" id="PS00154">
    <property type="entry name" value="ATPASE_E1_E2"/>
    <property type="match status" value="1"/>
</dbReference>
<evidence type="ECO:0000250" key="1"/>
<evidence type="ECO:0000255" key="2"/>
<evidence type="ECO:0000305" key="3"/>
<comment type="function">
    <text>Involved in copper efflux.</text>
</comment>
<comment type="catalytic activity">
    <reaction>
        <text>Cu(2+)(in) + ATP + H2O = Cu(2+)(out) + ADP + phosphate + H(+)</text>
        <dbReference type="Rhea" id="RHEA:10376"/>
        <dbReference type="ChEBI" id="CHEBI:15377"/>
        <dbReference type="ChEBI" id="CHEBI:15378"/>
        <dbReference type="ChEBI" id="CHEBI:29036"/>
        <dbReference type="ChEBI" id="CHEBI:30616"/>
        <dbReference type="ChEBI" id="CHEBI:43474"/>
        <dbReference type="ChEBI" id="CHEBI:456216"/>
        <dbReference type="EC" id="7.2.2.9"/>
    </reaction>
</comment>
<comment type="subcellular location">
    <subcellularLocation>
        <location evidence="3">Cell membrane</location>
        <topology evidence="3">Multi-pass membrane protein</topology>
    </subcellularLocation>
</comment>
<comment type="induction">
    <text>Transcriptionally regulated by HmrR in response to Cu(+) ions.</text>
</comment>
<comment type="similarity">
    <text evidence="3">Belongs to the cation transport ATPase (P-type) (TC 3.A.3) family. Type IB subfamily.</text>
</comment>